<dbReference type="EC" id="1.10.3.9" evidence="1"/>
<dbReference type="EMBL" id="AF206706">
    <property type="protein sequence ID" value="AAF89980.1"/>
    <property type="molecule type" value="Genomic_DNA"/>
</dbReference>
<dbReference type="EMBL" id="AY004262">
    <property type="protein sequence ID" value="AAG25877.1"/>
    <property type="molecule type" value="Genomic_DNA"/>
</dbReference>
<dbReference type="SMR" id="Q9MSC2"/>
<dbReference type="GO" id="GO:0009535">
    <property type="term" value="C:chloroplast thylakoid membrane"/>
    <property type="evidence" value="ECO:0007669"/>
    <property type="project" value="UniProtKB-SubCell"/>
</dbReference>
<dbReference type="GO" id="GO:0009523">
    <property type="term" value="C:photosystem II"/>
    <property type="evidence" value="ECO:0007669"/>
    <property type="project" value="UniProtKB-KW"/>
</dbReference>
<dbReference type="GO" id="GO:0016168">
    <property type="term" value="F:chlorophyll binding"/>
    <property type="evidence" value="ECO:0007669"/>
    <property type="project" value="UniProtKB-UniRule"/>
</dbReference>
<dbReference type="GO" id="GO:0045156">
    <property type="term" value="F:electron transporter, transferring electrons within the cyclic electron transport pathway of photosynthesis activity"/>
    <property type="evidence" value="ECO:0007669"/>
    <property type="project" value="InterPro"/>
</dbReference>
<dbReference type="GO" id="GO:0005506">
    <property type="term" value="F:iron ion binding"/>
    <property type="evidence" value="ECO:0007669"/>
    <property type="project" value="UniProtKB-UniRule"/>
</dbReference>
<dbReference type="GO" id="GO:0016682">
    <property type="term" value="F:oxidoreductase activity, acting on diphenols and related substances as donors, oxygen as acceptor"/>
    <property type="evidence" value="ECO:0007669"/>
    <property type="project" value="UniProtKB-UniRule"/>
</dbReference>
<dbReference type="GO" id="GO:0009772">
    <property type="term" value="P:photosynthetic electron transport in photosystem II"/>
    <property type="evidence" value="ECO:0007669"/>
    <property type="project" value="InterPro"/>
</dbReference>
<dbReference type="GO" id="GO:0009635">
    <property type="term" value="P:response to herbicide"/>
    <property type="evidence" value="ECO:0007669"/>
    <property type="project" value="UniProtKB-KW"/>
</dbReference>
<dbReference type="Gene3D" id="1.20.85.10">
    <property type="entry name" value="Photosystem II protein D1-like"/>
    <property type="match status" value="1"/>
</dbReference>
<dbReference type="HAMAP" id="MF_01379">
    <property type="entry name" value="PSII_PsbA_D1"/>
    <property type="match status" value="1"/>
</dbReference>
<dbReference type="InterPro" id="IPR055266">
    <property type="entry name" value="D1/D2"/>
</dbReference>
<dbReference type="InterPro" id="IPR036854">
    <property type="entry name" value="Photo_II_D1/D2_sf"/>
</dbReference>
<dbReference type="InterPro" id="IPR000484">
    <property type="entry name" value="Photo_RC_L/M"/>
</dbReference>
<dbReference type="InterPro" id="IPR055265">
    <property type="entry name" value="Photo_RC_L/M_CS"/>
</dbReference>
<dbReference type="InterPro" id="IPR005867">
    <property type="entry name" value="PSII_D1"/>
</dbReference>
<dbReference type="NCBIfam" id="TIGR01151">
    <property type="entry name" value="psbA"/>
    <property type="match status" value="1"/>
</dbReference>
<dbReference type="PANTHER" id="PTHR33149:SF12">
    <property type="entry name" value="PHOTOSYSTEM II D2 PROTEIN"/>
    <property type="match status" value="1"/>
</dbReference>
<dbReference type="PANTHER" id="PTHR33149">
    <property type="entry name" value="PHOTOSYSTEM II PROTEIN D1"/>
    <property type="match status" value="1"/>
</dbReference>
<dbReference type="Pfam" id="PF00124">
    <property type="entry name" value="Photo_RC"/>
    <property type="match status" value="1"/>
</dbReference>
<dbReference type="PRINTS" id="PR00256">
    <property type="entry name" value="REACTNCENTRE"/>
</dbReference>
<dbReference type="SUPFAM" id="SSF81483">
    <property type="entry name" value="Bacterial photosystem II reaction centre, L and M subunits"/>
    <property type="match status" value="1"/>
</dbReference>
<dbReference type="PROSITE" id="PS00244">
    <property type="entry name" value="REACTION_CENTER"/>
    <property type="match status" value="1"/>
</dbReference>
<keyword id="KW-0106">Calcium</keyword>
<keyword id="KW-0148">Chlorophyll</keyword>
<keyword id="KW-0150">Chloroplast</keyword>
<keyword id="KW-0157">Chromophore</keyword>
<keyword id="KW-0249">Electron transport</keyword>
<keyword id="KW-0359">Herbicide resistance</keyword>
<keyword id="KW-0408">Iron</keyword>
<keyword id="KW-0460">Magnesium</keyword>
<keyword id="KW-0464">Manganese</keyword>
<keyword id="KW-0472">Membrane</keyword>
<keyword id="KW-0479">Metal-binding</keyword>
<keyword id="KW-0560">Oxidoreductase</keyword>
<keyword id="KW-0602">Photosynthesis</keyword>
<keyword id="KW-0604">Photosystem II</keyword>
<keyword id="KW-0934">Plastid</keyword>
<keyword id="KW-0793">Thylakoid</keyword>
<keyword id="KW-0812">Transmembrane</keyword>
<keyword id="KW-1133">Transmembrane helix</keyword>
<keyword id="KW-0813">Transport</keyword>
<organism>
    <name type="scientific">Heterocapsa rotundata</name>
    <name type="common">Dinoflagellate</name>
    <name type="synonym">Amphidinium rotundatum</name>
    <dbReference type="NCBI Taxonomy" id="89963"/>
    <lineage>
        <taxon>Eukaryota</taxon>
        <taxon>Sar</taxon>
        <taxon>Alveolata</taxon>
        <taxon>Dinophyceae</taxon>
        <taxon>Peridiniales</taxon>
        <taxon>Heterocapsaceae</taxon>
        <taxon>Heterocapsa</taxon>
    </lineage>
</organism>
<accession>Q9MSC2</accession>
<sequence>MKNTFNTSNAFASAYSFWGYVIGFLLSTSNRLYIGWFGILMFPLISLATVAYIAAFIFAPPVDIDGIREPVAGALLYGNNIISGAVIPSSNAIGVHFYPVWEALGFDEWLYNGGTYQFVVLHFIFGAGAWMGREWEFAFRLGMRPWIFVAFSAPLVASCAVFVVYPIGQGSFSDGMPLGISGTFNFMLVFQAEHNILMHPFHILGVAGVFGGSLFSAMHGSLVTSSLLAETAGDLSLNVGYNFGQEDETYSISAAHGYFGRLIFQYASFNNSRSLHFFLAAWPVIGIWFTALGVSTMAFNLNGLNFNQSIIDSSGHLINSWADIVNRADLGMEVMHERNAHNFPLDLA</sequence>
<comment type="function">
    <text evidence="1">Photosystem II (PSII) is a light-driven water:plastoquinone oxidoreductase that uses light energy to abstract electrons from H(2)O, generating O(2) and a proton gradient subsequently used for ATP formation. It consists of a core antenna complex that captures photons, and an electron transfer chain that converts photonic excitation into a charge separation. The D1/D2 (PsbA/PsbD) reaction center heterodimer binds P680, the primary electron donor of PSII as well as several subsequent electron acceptors.</text>
</comment>
<comment type="catalytic activity">
    <reaction evidence="1">
        <text>2 a plastoquinone + 4 hnu + 2 H2O = 2 a plastoquinol + O2</text>
        <dbReference type="Rhea" id="RHEA:36359"/>
        <dbReference type="Rhea" id="RHEA-COMP:9561"/>
        <dbReference type="Rhea" id="RHEA-COMP:9562"/>
        <dbReference type="ChEBI" id="CHEBI:15377"/>
        <dbReference type="ChEBI" id="CHEBI:15379"/>
        <dbReference type="ChEBI" id="CHEBI:17757"/>
        <dbReference type="ChEBI" id="CHEBI:30212"/>
        <dbReference type="ChEBI" id="CHEBI:62192"/>
        <dbReference type="EC" id="1.10.3.9"/>
    </reaction>
</comment>
<comment type="cofactor">
    <text evidence="1">The D1/D2 heterodimer binds P680, chlorophylls that are the primary electron donor of PSII, and subsequent electron acceptors. It shares a non-heme iron and each subunit binds pheophytin, quinone, additional chlorophylls, carotenoids and lipids. D1 provides most of the ligands for the Mn4-Ca-O5 cluster of the oxygen-evolving complex (OEC). There is also a Cl(-1) ion associated with D1 and D2, which is required for oxygen evolution. The PSII complex binds additional chlorophylls, carotenoids and specific lipids.</text>
</comment>
<comment type="subunit">
    <text evidence="1">PSII is composed of 1 copy each of membrane proteins PsbA, PsbB, PsbC, PsbD, PsbE, PsbF, PsbH, PsbI, PsbJ, PsbK, PsbL, PsbM, PsbT, PsbX, PsbY, PsbZ, Psb30/Ycf12, at least 3 peripheral proteins of the oxygen-evolving complex and a large number of cofactors. It forms dimeric complexes.</text>
</comment>
<comment type="subcellular location">
    <subcellularLocation>
        <location evidence="1">Plastid</location>
        <location evidence="1">Chloroplast thylakoid membrane</location>
        <topology evidence="1">Multi-pass membrane protein</topology>
    </subcellularLocation>
</comment>
<comment type="PTM">
    <text evidence="1">Tyr-165 forms a radical intermediate that is referred to as redox-active TyrZ, YZ or Y-Z.</text>
</comment>
<comment type="miscellaneous">
    <text evidence="1">2 of the reaction center chlorophylls (ChlD1 and ChlD2) are entirely coordinated by water.</text>
</comment>
<comment type="miscellaneous">
    <text evidence="1">Herbicides such as atrazine, BNT, diuron or ioxynil bind in the Q(B) binding site and block subsequent electron transfer.</text>
</comment>
<comment type="similarity">
    <text evidence="1">Belongs to the reaction center PufL/M/PsbA/D family.</text>
</comment>
<evidence type="ECO:0000255" key="1">
    <source>
        <dbReference type="HAMAP-Rule" id="MF_01379"/>
    </source>
</evidence>
<protein>
    <recommendedName>
        <fullName evidence="1">Photosystem II protein D1</fullName>
        <shortName evidence="1">PSII D1 protein</shortName>
        <ecNumber evidence="1">1.10.3.9</ecNumber>
    </recommendedName>
    <alternativeName>
        <fullName evidence="1">Photosystem II Q(B) protein</fullName>
    </alternativeName>
</protein>
<name>PSBA_HETRO</name>
<geneLocation type="chloroplast"/>
<reference key="1">
    <citation type="journal article" date="2000" name="J. Mol. Evol.">
        <title>Phylogeny of ultra-rapidly evolving dinoflagellate chloroplast genes: a possible common origin for sporozoan and dinoflagellate plastids.</title>
        <authorList>
            <person name="Zhang Z."/>
            <person name="Green B.R."/>
            <person name="Cavalier-Smith T."/>
        </authorList>
    </citation>
    <scope>NUCLEOTIDE SEQUENCE [GENOMIC DNA]</scope>
    <source>
        <strain>NEPCC D680</strain>
    </source>
</reference>
<reference key="2">
    <citation type="journal article" date="2002" name="Mol. Biol. Evol.">
        <title>Evolution of dinoflagellate unigenic minicircles and the partially concerted divergence of their putative replicon origins.</title>
        <authorList>
            <person name="Zhang Z."/>
            <person name="Cavalier-Smith T."/>
            <person name="Green B.R."/>
        </authorList>
    </citation>
    <scope>NUCLEOTIDE SEQUENCE [GENOMIC DNA]</scope>
    <source>
        <strain>NEPCC D680</strain>
    </source>
</reference>
<proteinExistence type="inferred from homology"/>
<feature type="chain" id="PRO_0000316498" description="Photosystem II protein D1" evidence="1">
    <location>
        <begin position="1"/>
        <end position="348"/>
    </location>
</feature>
<feature type="transmembrane region" description="Helical" evidence="1">
    <location>
        <begin position="33"/>
        <end position="50"/>
    </location>
</feature>
<feature type="transmembrane region" description="Helical" evidence="1">
    <location>
        <begin position="122"/>
        <end position="137"/>
    </location>
</feature>
<feature type="transmembrane region" description="Helical" evidence="1">
    <location>
        <begin position="146"/>
        <end position="160"/>
    </location>
</feature>
<feature type="transmembrane region" description="Helical" evidence="1">
    <location>
        <begin position="201"/>
        <end position="222"/>
    </location>
</feature>
<feature type="transmembrane region" description="Helical" evidence="1">
    <location>
        <begin position="278"/>
        <end position="292"/>
    </location>
</feature>
<feature type="binding site" description="axial binding residue" evidence="1">
    <location>
        <position position="122"/>
    </location>
    <ligand>
        <name>chlorophyll a</name>
        <dbReference type="ChEBI" id="CHEBI:58416"/>
        <label>ChlzD1</label>
    </ligand>
    <ligandPart>
        <name>Mg</name>
        <dbReference type="ChEBI" id="CHEBI:25107"/>
    </ligandPart>
</feature>
<feature type="binding site" evidence="1">
    <location>
        <position position="130"/>
    </location>
    <ligand>
        <name>pheophytin a</name>
        <dbReference type="ChEBI" id="CHEBI:136840"/>
        <label>D1</label>
    </ligand>
</feature>
<feature type="binding site" evidence="1">
    <location>
        <position position="174"/>
    </location>
    <ligand>
        <name>[CaMn4O5] cluster</name>
        <dbReference type="ChEBI" id="CHEBI:189552"/>
    </ligand>
</feature>
<feature type="binding site" evidence="1">
    <location>
        <position position="193"/>
    </location>
    <ligand>
        <name>[CaMn4O5] cluster</name>
        <dbReference type="ChEBI" id="CHEBI:189552"/>
    </ligand>
</feature>
<feature type="binding site" description="axial binding residue" evidence="1">
    <location>
        <position position="202"/>
    </location>
    <ligand>
        <name>chlorophyll a</name>
        <dbReference type="ChEBI" id="CHEBI:58416"/>
        <label>PD1</label>
    </ligand>
    <ligandPart>
        <name>Mg</name>
        <dbReference type="ChEBI" id="CHEBI:25107"/>
    </ligandPart>
</feature>
<feature type="binding site" evidence="1">
    <location>
        <position position="219"/>
    </location>
    <ligand>
        <name>a quinone</name>
        <dbReference type="ChEBI" id="CHEBI:132124"/>
        <label>B</label>
    </ligand>
</feature>
<feature type="binding site" evidence="1">
    <location>
        <position position="219"/>
    </location>
    <ligand>
        <name>Fe cation</name>
        <dbReference type="ChEBI" id="CHEBI:24875"/>
        <note>ligand shared with heterodimeric partner</note>
    </ligand>
</feature>
<feature type="binding site" evidence="1">
    <location>
        <begin position="268"/>
        <end position="269"/>
    </location>
    <ligand>
        <name>a quinone</name>
        <dbReference type="ChEBI" id="CHEBI:132124"/>
        <label>B</label>
    </ligand>
</feature>
<feature type="binding site" evidence="1">
    <location>
        <position position="276"/>
    </location>
    <ligand>
        <name>Fe cation</name>
        <dbReference type="ChEBI" id="CHEBI:24875"/>
        <note>ligand shared with heterodimeric partner</note>
    </ligand>
</feature>
<feature type="binding site" evidence="1">
    <location>
        <position position="336"/>
    </location>
    <ligand>
        <name>[CaMn4O5] cluster</name>
        <dbReference type="ChEBI" id="CHEBI:189552"/>
    </ligand>
</feature>
<feature type="binding site" evidence="1">
    <location>
        <position position="337"/>
    </location>
    <ligand>
        <name>[CaMn4O5] cluster</name>
        <dbReference type="ChEBI" id="CHEBI:189552"/>
    </ligand>
</feature>
<feature type="binding site" evidence="1">
    <location>
        <position position="346"/>
    </location>
    <ligand>
        <name>[CaMn4O5] cluster</name>
        <dbReference type="ChEBI" id="CHEBI:189552"/>
    </ligand>
</feature>
<feature type="binding site" evidence="1">
    <location>
        <position position="348"/>
    </location>
    <ligand>
        <name>[CaMn4O5] cluster</name>
        <dbReference type="ChEBI" id="CHEBI:189552"/>
    </ligand>
</feature>
<feature type="site" description="Tyrosine radical intermediate" evidence="1">
    <location>
        <position position="165"/>
    </location>
</feature>
<feature type="site" description="Stabilizes free radical intermediate" evidence="1">
    <location>
        <position position="194"/>
    </location>
</feature>
<gene>
    <name evidence="1" type="primary">psbA</name>
</gene>